<proteinExistence type="inferred from homology"/>
<keyword id="KW-0044">Antibiotic</keyword>
<keyword id="KW-0929">Antimicrobial</keyword>
<keyword id="KW-0165">Cleavage on pair of basic residues</keyword>
<keyword id="KW-0964">Secreted</keyword>
<keyword id="KW-0732">Signal</keyword>
<organism>
    <name type="scientific">Tityus costatus</name>
    <name type="common">Brazilian scorpion</name>
    <dbReference type="NCBI Taxonomy" id="309814"/>
    <lineage>
        <taxon>Eukaryota</taxon>
        <taxon>Metazoa</taxon>
        <taxon>Ecdysozoa</taxon>
        <taxon>Arthropoda</taxon>
        <taxon>Chelicerata</taxon>
        <taxon>Arachnida</taxon>
        <taxon>Scorpiones</taxon>
        <taxon>Buthida</taxon>
        <taxon>Buthoidea</taxon>
        <taxon>Buthidae</taxon>
        <taxon>Tityus</taxon>
    </lineage>
</organism>
<name>NDB4U_TITCO</name>
<sequence length="73" mass="8451">MQIKHLITLFFLVLIVADQCSAFFSLIPSLIGGLVSAIKGRKKREISTQIDQYRNLQKREAELEELLDRLPMY</sequence>
<comment type="function">
    <text evidence="1">Antibacterial peptide.</text>
</comment>
<comment type="subcellular location">
    <subcellularLocation>
        <location evidence="1">Secreted</location>
    </subcellularLocation>
</comment>
<comment type="tissue specificity">
    <text evidence="3">Expressed by the venom gland.</text>
</comment>
<comment type="miscellaneous">
    <text evidence="3">The primary structure of the mature peptide is identical to that of TtAP-3 from Tityus trinitatis (AC P0DRB7) and ToAP4 from Tityus obscurus (AC A0A1E1WVR9).</text>
</comment>
<comment type="similarity">
    <text evidence="3">Belongs to the non-disulfide-bridged peptide (NDBP) superfamily. Short antimicrobial peptide (group 4) family.</text>
</comment>
<accession>Q5G8B3</accession>
<reference key="1">
    <citation type="journal article" date="2005" name="Toxicon">
        <title>The Brazilian scorpion Tityus costatus Karsch: genes, peptides and function.</title>
        <authorList>
            <person name="Diego-Garcia E."/>
            <person name="Batista C.V.F."/>
            <person name="Garcia-Gomez B.I."/>
            <person name="Lucas S."/>
            <person name="Candido D.M."/>
            <person name="Gomez-Lagunas F."/>
            <person name="Possani L.D."/>
        </authorList>
    </citation>
    <scope>NUCLEOTIDE SEQUENCE [MRNA]</scope>
    <source>
        <tissue>Venom gland</tissue>
    </source>
</reference>
<dbReference type="EMBL" id="AY740688">
    <property type="protein sequence ID" value="AAW72458.1"/>
    <property type="molecule type" value="mRNA"/>
</dbReference>
<dbReference type="SMR" id="Q5G8B3"/>
<dbReference type="GO" id="GO:0005576">
    <property type="term" value="C:extracellular region"/>
    <property type="evidence" value="ECO:0007669"/>
    <property type="project" value="UniProtKB-SubCell"/>
</dbReference>
<dbReference type="GO" id="GO:0042742">
    <property type="term" value="P:defense response to bacterium"/>
    <property type="evidence" value="ECO:0007669"/>
    <property type="project" value="UniProtKB-KW"/>
</dbReference>
<feature type="signal peptide" evidence="2">
    <location>
        <begin position="1"/>
        <end position="22"/>
    </location>
</feature>
<feature type="peptide" id="PRO_0000231513" description="Antimicrobial peptide 6">
    <location>
        <begin position="23"/>
        <end position="39"/>
    </location>
</feature>
<feature type="propeptide" id="PRO_0000231514">
    <location>
        <begin position="45"/>
        <end position="73"/>
    </location>
</feature>
<protein>
    <recommendedName>
        <fullName evidence="3">Antimicrobial peptide 6</fullName>
    </recommendedName>
    <alternativeName>
        <fullName>Putative antimicrobial peptide clone 6</fullName>
    </alternativeName>
</protein>
<evidence type="ECO:0000250" key="1"/>
<evidence type="ECO:0000255" key="2"/>
<evidence type="ECO:0000305" key="3"/>